<organism>
    <name type="scientific">Burkholderia ambifaria (strain ATCC BAA-244 / DSM 16087 / CCUG 44356 / LMG 19182 / AMMD)</name>
    <name type="common">Burkholderia cepacia (strain AMMD)</name>
    <dbReference type="NCBI Taxonomy" id="339670"/>
    <lineage>
        <taxon>Bacteria</taxon>
        <taxon>Pseudomonadati</taxon>
        <taxon>Pseudomonadota</taxon>
        <taxon>Betaproteobacteria</taxon>
        <taxon>Burkholderiales</taxon>
        <taxon>Burkholderiaceae</taxon>
        <taxon>Burkholderia</taxon>
        <taxon>Burkholderia cepacia complex</taxon>
    </lineage>
</organism>
<keyword id="KW-0687">Ribonucleoprotein</keyword>
<keyword id="KW-0689">Ribosomal protein</keyword>
<keyword id="KW-0694">RNA-binding</keyword>
<keyword id="KW-0699">rRNA-binding</keyword>
<keyword id="KW-0820">tRNA-binding</keyword>
<feature type="chain" id="PRO_1000054588" description="Large ribosomal subunit protein uL16">
    <location>
        <begin position="1"/>
        <end position="138"/>
    </location>
</feature>
<feature type="region of interest" description="Disordered" evidence="2">
    <location>
        <begin position="1"/>
        <end position="24"/>
    </location>
</feature>
<feature type="compositionally biased region" description="Basic residues" evidence="2">
    <location>
        <begin position="1"/>
        <end position="13"/>
    </location>
</feature>
<accession>Q0BJ39</accession>
<proteinExistence type="inferred from homology"/>
<protein>
    <recommendedName>
        <fullName evidence="1">Large ribosomal subunit protein uL16</fullName>
    </recommendedName>
    <alternativeName>
        <fullName evidence="3">50S ribosomal protein L16</fullName>
    </alternativeName>
</protein>
<gene>
    <name evidence="1" type="primary">rplP</name>
    <name type="ordered locus">Bamb_0274</name>
</gene>
<reference key="1">
    <citation type="submission" date="2006-08" db="EMBL/GenBank/DDBJ databases">
        <title>Complete sequence of chromosome 1 of Burkholderia cepacia AMMD.</title>
        <authorList>
            <person name="Copeland A."/>
            <person name="Lucas S."/>
            <person name="Lapidus A."/>
            <person name="Barry K."/>
            <person name="Detter J.C."/>
            <person name="Glavina del Rio T."/>
            <person name="Hammon N."/>
            <person name="Israni S."/>
            <person name="Pitluck S."/>
            <person name="Bruce D."/>
            <person name="Chain P."/>
            <person name="Malfatti S."/>
            <person name="Shin M."/>
            <person name="Vergez L."/>
            <person name="Schmutz J."/>
            <person name="Larimer F."/>
            <person name="Land M."/>
            <person name="Hauser L."/>
            <person name="Kyrpides N."/>
            <person name="Kim E."/>
            <person name="Parke J."/>
            <person name="Coenye T."/>
            <person name="Konstantinidis K."/>
            <person name="Ramette A."/>
            <person name="Tiedje J."/>
            <person name="Richardson P."/>
        </authorList>
    </citation>
    <scope>NUCLEOTIDE SEQUENCE [LARGE SCALE GENOMIC DNA]</scope>
    <source>
        <strain>ATCC BAA-244 / DSM 16087 / CCUG 44356 / LMG 19182 / AMMD</strain>
    </source>
</reference>
<sequence length="138" mass="15582">MLQPKRRKYRKEQKGRNTGKATRGNAVSFGDFGLKAIGRGRLTARQIEAARRAMTRHIKRGGRIWIRIFPDKPISQKPAEVRMGNGKGNPEYYVAEIQPGKMLYEMDGVTEELAREAFRLAAAKLPLKTAFIVRQLGA</sequence>
<comment type="function">
    <text evidence="1">Binds 23S rRNA and is also seen to make contacts with the A and possibly P site tRNAs.</text>
</comment>
<comment type="subunit">
    <text evidence="1">Part of the 50S ribosomal subunit.</text>
</comment>
<comment type="similarity">
    <text evidence="1">Belongs to the universal ribosomal protein uL16 family.</text>
</comment>
<dbReference type="EMBL" id="CP000440">
    <property type="protein sequence ID" value="ABI85834.1"/>
    <property type="molecule type" value="Genomic_DNA"/>
</dbReference>
<dbReference type="RefSeq" id="WP_006752927.1">
    <property type="nucleotide sequence ID" value="NZ_CP009798.1"/>
</dbReference>
<dbReference type="SMR" id="Q0BJ39"/>
<dbReference type="GeneID" id="93143355"/>
<dbReference type="KEGG" id="bam:Bamb_0274"/>
<dbReference type="PATRIC" id="fig|339670.21.peg.1346"/>
<dbReference type="eggNOG" id="COG0197">
    <property type="taxonomic scope" value="Bacteria"/>
</dbReference>
<dbReference type="Proteomes" id="UP000000662">
    <property type="component" value="Chromosome 1"/>
</dbReference>
<dbReference type="GO" id="GO:0022625">
    <property type="term" value="C:cytosolic large ribosomal subunit"/>
    <property type="evidence" value="ECO:0007669"/>
    <property type="project" value="TreeGrafter"/>
</dbReference>
<dbReference type="GO" id="GO:0019843">
    <property type="term" value="F:rRNA binding"/>
    <property type="evidence" value="ECO:0007669"/>
    <property type="project" value="UniProtKB-UniRule"/>
</dbReference>
<dbReference type="GO" id="GO:0003735">
    <property type="term" value="F:structural constituent of ribosome"/>
    <property type="evidence" value="ECO:0007669"/>
    <property type="project" value="InterPro"/>
</dbReference>
<dbReference type="GO" id="GO:0000049">
    <property type="term" value="F:tRNA binding"/>
    <property type="evidence" value="ECO:0007669"/>
    <property type="project" value="UniProtKB-KW"/>
</dbReference>
<dbReference type="GO" id="GO:0006412">
    <property type="term" value="P:translation"/>
    <property type="evidence" value="ECO:0007669"/>
    <property type="project" value="UniProtKB-UniRule"/>
</dbReference>
<dbReference type="CDD" id="cd01433">
    <property type="entry name" value="Ribosomal_L16_L10e"/>
    <property type="match status" value="1"/>
</dbReference>
<dbReference type="FunFam" id="3.90.1170.10:FF:000001">
    <property type="entry name" value="50S ribosomal protein L16"/>
    <property type="match status" value="1"/>
</dbReference>
<dbReference type="Gene3D" id="3.90.1170.10">
    <property type="entry name" value="Ribosomal protein L10e/L16"/>
    <property type="match status" value="1"/>
</dbReference>
<dbReference type="HAMAP" id="MF_01342">
    <property type="entry name" value="Ribosomal_uL16"/>
    <property type="match status" value="1"/>
</dbReference>
<dbReference type="InterPro" id="IPR047873">
    <property type="entry name" value="Ribosomal_uL16"/>
</dbReference>
<dbReference type="InterPro" id="IPR000114">
    <property type="entry name" value="Ribosomal_uL16_bact-type"/>
</dbReference>
<dbReference type="InterPro" id="IPR020798">
    <property type="entry name" value="Ribosomal_uL16_CS"/>
</dbReference>
<dbReference type="InterPro" id="IPR016180">
    <property type="entry name" value="Ribosomal_uL16_dom"/>
</dbReference>
<dbReference type="InterPro" id="IPR036920">
    <property type="entry name" value="Ribosomal_uL16_sf"/>
</dbReference>
<dbReference type="NCBIfam" id="TIGR01164">
    <property type="entry name" value="rplP_bact"/>
    <property type="match status" value="1"/>
</dbReference>
<dbReference type="PANTHER" id="PTHR12220">
    <property type="entry name" value="50S/60S RIBOSOMAL PROTEIN L16"/>
    <property type="match status" value="1"/>
</dbReference>
<dbReference type="PANTHER" id="PTHR12220:SF13">
    <property type="entry name" value="LARGE RIBOSOMAL SUBUNIT PROTEIN UL16M"/>
    <property type="match status" value="1"/>
</dbReference>
<dbReference type="Pfam" id="PF00252">
    <property type="entry name" value="Ribosomal_L16"/>
    <property type="match status" value="1"/>
</dbReference>
<dbReference type="PRINTS" id="PR00060">
    <property type="entry name" value="RIBOSOMALL16"/>
</dbReference>
<dbReference type="SUPFAM" id="SSF54686">
    <property type="entry name" value="Ribosomal protein L16p/L10e"/>
    <property type="match status" value="1"/>
</dbReference>
<dbReference type="PROSITE" id="PS00586">
    <property type="entry name" value="RIBOSOMAL_L16_1"/>
    <property type="match status" value="1"/>
</dbReference>
<evidence type="ECO:0000255" key="1">
    <source>
        <dbReference type="HAMAP-Rule" id="MF_01342"/>
    </source>
</evidence>
<evidence type="ECO:0000256" key="2">
    <source>
        <dbReference type="SAM" id="MobiDB-lite"/>
    </source>
</evidence>
<evidence type="ECO:0000305" key="3"/>
<name>RL16_BURCM</name>